<accession>Q1MNB3</accession>
<protein>
    <recommendedName>
        <fullName evidence="1">ATP-dependent protease ATPase subunit HslU</fullName>
    </recommendedName>
    <alternativeName>
        <fullName evidence="1">Unfoldase HslU</fullName>
    </alternativeName>
</protein>
<dbReference type="EMBL" id="AM236080">
    <property type="protein sequence ID" value="CAK05539.1"/>
    <property type="molecule type" value="Genomic_DNA"/>
</dbReference>
<dbReference type="RefSeq" id="WP_011649875.1">
    <property type="nucleotide sequence ID" value="NC_008380.1"/>
</dbReference>
<dbReference type="SMR" id="Q1MNB3"/>
<dbReference type="EnsemblBacteria" id="CAK05539">
    <property type="protein sequence ID" value="CAK05539"/>
    <property type="gene ID" value="RL0051"/>
</dbReference>
<dbReference type="GeneID" id="84667557"/>
<dbReference type="KEGG" id="rle:RL0051"/>
<dbReference type="eggNOG" id="COG1220">
    <property type="taxonomic scope" value="Bacteria"/>
</dbReference>
<dbReference type="HOGENOM" id="CLU_033123_0_0_5"/>
<dbReference type="Proteomes" id="UP000006575">
    <property type="component" value="Chromosome"/>
</dbReference>
<dbReference type="GO" id="GO:0009376">
    <property type="term" value="C:HslUV protease complex"/>
    <property type="evidence" value="ECO:0007669"/>
    <property type="project" value="UniProtKB-UniRule"/>
</dbReference>
<dbReference type="GO" id="GO:0005524">
    <property type="term" value="F:ATP binding"/>
    <property type="evidence" value="ECO:0007669"/>
    <property type="project" value="UniProtKB-UniRule"/>
</dbReference>
<dbReference type="GO" id="GO:0016887">
    <property type="term" value="F:ATP hydrolysis activity"/>
    <property type="evidence" value="ECO:0007669"/>
    <property type="project" value="InterPro"/>
</dbReference>
<dbReference type="GO" id="GO:0008233">
    <property type="term" value="F:peptidase activity"/>
    <property type="evidence" value="ECO:0007669"/>
    <property type="project" value="InterPro"/>
</dbReference>
<dbReference type="GO" id="GO:0036402">
    <property type="term" value="F:proteasome-activating activity"/>
    <property type="evidence" value="ECO:0007669"/>
    <property type="project" value="UniProtKB-UniRule"/>
</dbReference>
<dbReference type="GO" id="GO:0043335">
    <property type="term" value="P:protein unfolding"/>
    <property type="evidence" value="ECO:0007669"/>
    <property type="project" value="UniProtKB-UniRule"/>
</dbReference>
<dbReference type="GO" id="GO:0051603">
    <property type="term" value="P:proteolysis involved in protein catabolic process"/>
    <property type="evidence" value="ECO:0007669"/>
    <property type="project" value="TreeGrafter"/>
</dbReference>
<dbReference type="CDD" id="cd19498">
    <property type="entry name" value="RecA-like_HslU"/>
    <property type="match status" value="1"/>
</dbReference>
<dbReference type="FunFam" id="3.40.50.300:FF:000213">
    <property type="entry name" value="ATP-dependent protease ATPase subunit HslU"/>
    <property type="match status" value="1"/>
</dbReference>
<dbReference type="FunFam" id="3.40.50.300:FF:000220">
    <property type="entry name" value="ATP-dependent protease ATPase subunit HslU"/>
    <property type="match status" value="1"/>
</dbReference>
<dbReference type="Gene3D" id="1.10.8.60">
    <property type="match status" value="1"/>
</dbReference>
<dbReference type="Gene3D" id="1.10.8.10">
    <property type="entry name" value="DNA helicase RuvA subunit, C-terminal domain"/>
    <property type="match status" value="1"/>
</dbReference>
<dbReference type="Gene3D" id="3.40.50.300">
    <property type="entry name" value="P-loop containing nucleotide triphosphate hydrolases"/>
    <property type="match status" value="2"/>
</dbReference>
<dbReference type="HAMAP" id="MF_00249">
    <property type="entry name" value="HslU"/>
    <property type="match status" value="1"/>
</dbReference>
<dbReference type="InterPro" id="IPR003593">
    <property type="entry name" value="AAA+_ATPase"/>
</dbReference>
<dbReference type="InterPro" id="IPR050052">
    <property type="entry name" value="ATP-dep_Clp_protease_ClpX"/>
</dbReference>
<dbReference type="InterPro" id="IPR003959">
    <property type="entry name" value="ATPase_AAA_core"/>
</dbReference>
<dbReference type="InterPro" id="IPR019489">
    <property type="entry name" value="Clp_ATPase_C"/>
</dbReference>
<dbReference type="InterPro" id="IPR004491">
    <property type="entry name" value="HslU"/>
</dbReference>
<dbReference type="InterPro" id="IPR027417">
    <property type="entry name" value="P-loop_NTPase"/>
</dbReference>
<dbReference type="NCBIfam" id="TIGR00390">
    <property type="entry name" value="hslU"/>
    <property type="match status" value="1"/>
</dbReference>
<dbReference type="NCBIfam" id="NF003544">
    <property type="entry name" value="PRK05201.1"/>
    <property type="match status" value="1"/>
</dbReference>
<dbReference type="PANTHER" id="PTHR48102">
    <property type="entry name" value="ATP-DEPENDENT CLP PROTEASE ATP-BINDING SUBUNIT CLPX-LIKE, MITOCHONDRIAL-RELATED"/>
    <property type="match status" value="1"/>
</dbReference>
<dbReference type="PANTHER" id="PTHR48102:SF3">
    <property type="entry name" value="ATP-DEPENDENT PROTEASE ATPASE SUBUNIT HSLU"/>
    <property type="match status" value="1"/>
</dbReference>
<dbReference type="Pfam" id="PF00004">
    <property type="entry name" value="AAA"/>
    <property type="match status" value="1"/>
</dbReference>
<dbReference type="Pfam" id="PF07724">
    <property type="entry name" value="AAA_2"/>
    <property type="match status" value="1"/>
</dbReference>
<dbReference type="SMART" id="SM00382">
    <property type="entry name" value="AAA"/>
    <property type="match status" value="1"/>
</dbReference>
<dbReference type="SMART" id="SM01086">
    <property type="entry name" value="ClpB_D2-small"/>
    <property type="match status" value="1"/>
</dbReference>
<dbReference type="SUPFAM" id="SSF52540">
    <property type="entry name" value="P-loop containing nucleoside triphosphate hydrolases"/>
    <property type="match status" value="1"/>
</dbReference>
<keyword id="KW-0067">ATP-binding</keyword>
<keyword id="KW-0143">Chaperone</keyword>
<keyword id="KW-0963">Cytoplasm</keyword>
<keyword id="KW-0547">Nucleotide-binding</keyword>
<keyword id="KW-0346">Stress response</keyword>
<comment type="function">
    <text evidence="1">ATPase subunit of a proteasome-like degradation complex; this subunit has chaperone activity. The binding of ATP and its subsequent hydrolysis by HslU are essential for unfolding of protein substrates subsequently hydrolyzed by HslV. HslU recognizes the N-terminal part of its protein substrates and unfolds these before they are guided to HslV for hydrolysis.</text>
</comment>
<comment type="subunit">
    <text evidence="1">A double ring-shaped homohexamer of HslV is capped on each side by a ring-shaped HslU homohexamer. The assembly of the HslU/HslV complex is dependent on binding of ATP.</text>
</comment>
<comment type="subcellular location">
    <subcellularLocation>
        <location evidence="1">Cytoplasm</location>
    </subcellularLocation>
</comment>
<comment type="similarity">
    <text evidence="1">Belongs to the ClpX chaperone family. HslU subfamily.</text>
</comment>
<name>HSLU_RHIJ3</name>
<proteinExistence type="inferred from homology"/>
<gene>
    <name evidence="1" type="primary">hslU</name>
    <name type="ordered locus">RL0051</name>
</gene>
<organism>
    <name type="scientific">Rhizobium johnstonii (strain DSM 114642 / LMG 32736 / 3841)</name>
    <name type="common">Rhizobium leguminosarum bv. viciae</name>
    <dbReference type="NCBI Taxonomy" id="216596"/>
    <lineage>
        <taxon>Bacteria</taxon>
        <taxon>Pseudomonadati</taxon>
        <taxon>Pseudomonadota</taxon>
        <taxon>Alphaproteobacteria</taxon>
        <taxon>Hyphomicrobiales</taxon>
        <taxon>Rhizobiaceae</taxon>
        <taxon>Rhizobium/Agrobacterium group</taxon>
        <taxon>Rhizobium</taxon>
        <taxon>Rhizobium johnstonii</taxon>
    </lineage>
</organism>
<evidence type="ECO:0000255" key="1">
    <source>
        <dbReference type="HAMAP-Rule" id="MF_00249"/>
    </source>
</evidence>
<feature type="chain" id="PRO_1000012785" description="ATP-dependent protease ATPase subunit HslU">
    <location>
        <begin position="1"/>
        <end position="435"/>
    </location>
</feature>
<feature type="binding site" evidence="1">
    <location>
        <position position="18"/>
    </location>
    <ligand>
        <name>ATP</name>
        <dbReference type="ChEBI" id="CHEBI:30616"/>
    </ligand>
</feature>
<feature type="binding site" evidence="1">
    <location>
        <begin position="60"/>
        <end position="65"/>
    </location>
    <ligand>
        <name>ATP</name>
        <dbReference type="ChEBI" id="CHEBI:30616"/>
    </ligand>
</feature>
<feature type="binding site" evidence="1">
    <location>
        <position position="248"/>
    </location>
    <ligand>
        <name>ATP</name>
        <dbReference type="ChEBI" id="CHEBI:30616"/>
    </ligand>
</feature>
<feature type="binding site" evidence="1">
    <location>
        <position position="313"/>
    </location>
    <ligand>
        <name>ATP</name>
        <dbReference type="ChEBI" id="CHEBI:30616"/>
    </ligand>
</feature>
<feature type="binding site" evidence="1">
    <location>
        <position position="385"/>
    </location>
    <ligand>
        <name>ATP</name>
        <dbReference type="ChEBI" id="CHEBI:30616"/>
    </ligand>
</feature>
<reference key="1">
    <citation type="journal article" date="2006" name="Genome Biol.">
        <title>The genome of Rhizobium leguminosarum has recognizable core and accessory components.</title>
        <authorList>
            <person name="Young J.P.W."/>
            <person name="Crossman L.C."/>
            <person name="Johnston A.W.B."/>
            <person name="Thomson N.R."/>
            <person name="Ghazoui Z.F."/>
            <person name="Hull K.H."/>
            <person name="Wexler M."/>
            <person name="Curson A.R.J."/>
            <person name="Todd J.D."/>
            <person name="Poole P.S."/>
            <person name="Mauchline T.H."/>
            <person name="East A.K."/>
            <person name="Quail M.A."/>
            <person name="Churcher C."/>
            <person name="Arrowsmith C."/>
            <person name="Cherevach I."/>
            <person name="Chillingworth T."/>
            <person name="Clarke K."/>
            <person name="Cronin A."/>
            <person name="Davis P."/>
            <person name="Fraser A."/>
            <person name="Hance Z."/>
            <person name="Hauser H."/>
            <person name="Jagels K."/>
            <person name="Moule S."/>
            <person name="Mungall K."/>
            <person name="Norbertczak H."/>
            <person name="Rabbinowitsch E."/>
            <person name="Sanders M."/>
            <person name="Simmonds M."/>
            <person name="Whitehead S."/>
            <person name="Parkhill J."/>
        </authorList>
    </citation>
    <scope>NUCLEOTIDE SEQUENCE [LARGE SCALE GENOMIC DNA]</scope>
    <source>
        <strain>DSM 114642 / LMG 32736 / 3841</strain>
    </source>
</reference>
<sequence length="435" mass="47959">MTTFSPREIVSELDRYIIGQHDAKRAVAIALRNRWRRQQLDPSLRDEVMPKNILMIGPTGVGKTEISRRLAKLAGAPFIKVEATKFTEVGYVGRDVEQIIRDLVEVGIGLVREKKRAEVQAKAHVSAEERVLDALVGTTASPATRENFRKKLRDGELDDKEIDIEVADAGSGMGGFEIPGMPGANIGVLNLSEMFGKAMGGRTKKVRTTVKASYSDLIRDESDKLIDNEVIQREAVRSTENDGIVFLDEIDKIAARDGGMGAGVSREGVQRDLLPLVEGTTVSTKYGPVKTDHILFIASGAFHVSKPSDLLPELQGRLPIRVELRPLNKDDFRRILTETEASLIRQYRALMETESLSLEFTDDAIDALADVAVHLNSSVENIGARRLQTVMERVLDDISYNAPDRGGTAVTIDAAYVREHVGDLAQNTDLSRFIL</sequence>